<proteinExistence type="inferred from homology"/>
<dbReference type="EMBL" id="AB063523">
    <property type="status" value="NOT_ANNOTATED_CDS"/>
    <property type="molecule type" value="Genomic_DNA"/>
</dbReference>
<dbReference type="SMR" id="P0DKS2"/>
<dbReference type="OrthoDB" id="6462033at2"/>
<dbReference type="Proteomes" id="UP000000562">
    <property type="component" value="Plasmid pWb1"/>
</dbReference>
<dbReference type="CDD" id="cd06470">
    <property type="entry name" value="ACD_IbpA-B_like"/>
    <property type="match status" value="1"/>
</dbReference>
<dbReference type="Gene3D" id="2.60.40.790">
    <property type="match status" value="1"/>
</dbReference>
<dbReference type="InterPro" id="IPR002068">
    <property type="entry name" value="A-crystallin/Hsp20_dom"/>
</dbReference>
<dbReference type="InterPro" id="IPR037913">
    <property type="entry name" value="ACD_IbpA/B"/>
</dbReference>
<dbReference type="InterPro" id="IPR008978">
    <property type="entry name" value="HSP20-like_chaperone"/>
</dbReference>
<dbReference type="PANTHER" id="PTHR47062">
    <property type="match status" value="1"/>
</dbReference>
<dbReference type="PANTHER" id="PTHR47062:SF1">
    <property type="entry name" value="SMALL HEAT SHOCK PROTEIN IBPA"/>
    <property type="match status" value="1"/>
</dbReference>
<dbReference type="Pfam" id="PF00011">
    <property type="entry name" value="HSP20"/>
    <property type="match status" value="1"/>
</dbReference>
<dbReference type="SUPFAM" id="SSF49764">
    <property type="entry name" value="HSP20-like chaperones"/>
    <property type="match status" value="1"/>
</dbReference>
<dbReference type="PROSITE" id="PS01031">
    <property type="entry name" value="SHSP"/>
    <property type="match status" value="1"/>
</dbReference>
<accession>P0DKS2</accession>
<feature type="chain" id="PRO_0000420409" description="Small heat shock protein ibp">
    <location>
        <begin position="1"/>
        <end position="133"/>
    </location>
</feature>
<feature type="domain" description="sHSP" evidence="1">
    <location>
        <begin position="11"/>
        <end position="126"/>
    </location>
</feature>
<name>IBP_WIGBR</name>
<gene>
    <name type="primary">ibp</name>
    <name type="synonym">WGpWb0006</name>
    <name type="ordered locus">WIGBRp0060</name>
</gene>
<keyword id="KW-0614">Plasmid</keyword>
<keyword id="KW-1185">Reference proteome</keyword>
<keyword id="KW-0346">Stress response</keyword>
<evidence type="ECO:0000255" key="1">
    <source>
        <dbReference type="PROSITE-ProRule" id="PRU00285"/>
    </source>
</evidence>
<reference key="1">
    <citation type="journal article" date="2002" name="Nat. Genet.">
        <title>Genome sequence of the endocellular obligate symbiont of tsetse flies, Wigglesworthia glossinidia.</title>
        <authorList>
            <person name="Akman L."/>
            <person name="Yamashita A."/>
            <person name="Watanabe H."/>
            <person name="Oshima K."/>
            <person name="Shiba T."/>
            <person name="Hattori M."/>
            <person name="Aksoy S."/>
        </authorList>
    </citation>
    <scope>NUCLEOTIDE SEQUENCE [LARGE SCALE GENOMIC DNA]</scope>
</reference>
<geneLocation type="plasmid">
    <name>pWb1</name>
    <name>pWig1</name>
</geneLocation>
<organism>
    <name type="scientific">Wigglesworthia glossinidia brevipalpis</name>
    <dbReference type="NCBI Taxonomy" id="36870"/>
    <lineage>
        <taxon>Bacteria</taxon>
        <taxon>Pseudomonadati</taxon>
        <taxon>Pseudomonadota</taxon>
        <taxon>Gammaproteobacteria</taxon>
        <taxon>Enterobacterales</taxon>
        <taxon>Erwiniaceae</taxon>
        <taxon>Wigglesworthia</taxon>
    </lineage>
</organism>
<comment type="similarity">
    <text evidence="1">Belongs to the small heat shock protein (HSP20) family.</text>
</comment>
<protein>
    <recommendedName>
        <fullName>Small heat shock protein ibp</fullName>
    </recommendedName>
</protein>
<sequence>MDNLFSRITGEQPLSENPNYNLIQLDKYNYELSVSVPGYKKEELEVSIINNRLNINSKSKKEKEKETKKINWIHQGILKNNFSISFKLEHKIKIKYANLKHGILNLSFFYDLPDQEKPKKISINEEHDHKCNI</sequence>